<organism>
    <name type="scientific">Thermodesulfovibrio yellowstonii (strain ATCC 51303 / DSM 11347 / YP87)</name>
    <dbReference type="NCBI Taxonomy" id="289376"/>
    <lineage>
        <taxon>Bacteria</taxon>
        <taxon>Pseudomonadati</taxon>
        <taxon>Nitrospirota</taxon>
        <taxon>Thermodesulfovibrionia</taxon>
        <taxon>Thermodesulfovibrionales</taxon>
        <taxon>Thermodesulfovibrionaceae</taxon>
        <taxon>Thermodesulfovibrio</taxon>
    </lineage>
</organism>
<accession>B5YIG8</accession>
<keyword id="KW-0997">Cell inner membrane</keyword>
<keyword id="KW-1003">Cell membrane</keyword>
<keyword id="KW-0472">Membrane</keyword>
<keyword id="KW-0653">Protein transport</keyword>
<keyword id="KW-1185">Reference proteome</keyword>
<keyword id="KW-0811">Translocation</keyword>
<keyword id="KW-0812">Transmembrane</keyword>
<keyword id="KW-1133">Transmembrane helix</keyword>
<keyword id="KW-0813">Transport</keyword>
<sequence>MIQILGKTNIDFLGKKYIALALSCIMIILGIFAIFQIHAGKANLGVDFAGGLSLQIRFSQPVTLAEVRTVLDKAGIKDADIQELPTEKKILIKLKKQQEGIQDTIEKALKENLTAKEPIIESVTEIGPKIGERTKRDALFAILAATAGILIYIAIRFKFHFSIGATVATFHDVMAVLGIFYILDKEINLIFISALLTIAGYSLTDTVVVFDRIRENLGKVAKGTMTLEALMNKSINEVLSRTIVTSLTTLMAAVALFFFGGEVLHDFALAMILGILVGTYSSIFVASPVVLLLGKNSLIKR</sequence>
<evidence type="ECO:0000255" key="1">
    <source>
        <dbReference type="HAMAP-Rule" id="MF_01464"/>
    </source>
</evidence>
<reference key="1">
    <citation type="submission" date="2008-08" db="EMBL/GenBank/DDBJ databases">
        <title>The complete genome sequence of Thermodesulfovibrio yellowstonii strain ATCC 51303 / DSM 11347 / YP87.</title>
        <authorList>
            <person name="Dodson R.J."/>
            <person name="Durkin A.S."/>
            <person name="Wu M."/>
            <person name="Eisen J."/>
            <person name="Sutton G."/>
        </authorList>
    </citation>
    <scope>NUCLEOTIDE SEQUENCE [LARGE SCALE GENOMIC DNA]</scope>
    <source>
        <strain>ATCC 51303 / DSM 11347 / YP87</strain>
    </source>
</reference>
<protein>
    <recommendedName>
        <fullName>Protein translocase subunit SecF</fullName>
    </recommendedName>
</protein>
<comment type="function">
    <text evidence="1">Part of the Sec protein translocase complex. Interacts with the SecYEG preprotein conducting channel. SecDF uses the proton motive force (PMF) to complete protein translocation after the ATP-dependent function of SecA.</text>
</comment>
<comment type="subunit">
    <text evidence="1">Forms a complex with SecD. Part of the essential Sec protein translocation apparatus which comprises SecA, SecYEG and auxiliary proteins SecDF. Other proteins may also be involved.</text>
</comment>
<comment type="subcellular location">
    <subcellularLocation>
        <location evidence="1">Cell inner membrane</location>
        <topology evidence="1">Multi-pass membrane protein</topology>
    </subcellularLocation>
</comment>
<comment type="similarity">
    <text evidence="1">Belongs to the SecD/SecF family. SecF subfamily.</text>
</comment>
<name>SECF_THEYD</name>
<feature type="chain" id="PRO_0000412705" description="Protein translocase subunit SecF">
    <location>
        <begin position="1"/>
        <end position="301"/>
    </location>
</feature>
<feature type="transmembrane region" description="Helical" evidence="1">
    <location>
        <begin position="17"/>
        <end position="37"/>
    </location>
</feature>
<feature type="transmembrane region" description="Helical" evidence="1">
    <location>
        <begin position="137"/>
        <end position="157"/>
    </location>
</feature>
<feature type="transmembrane region" description="Helical" evidence="1">
    <location>
        <begin position="163"/>
        <end position="183"/>
    </location>
</feature>
<feature type="transmembrane region" description="Helical" evidence="1">
    <location>
        <begin position="190"/>
        <end position="210"/>
    </location>
</feature>
<feature type="transmembrane region" description="Helical" evidence="1">
    <location>
        <begin position="239"/>
        <end position="261"/>
    </location>
</feature>
<feature type="transmembrane region" description="Helical" evidence="1">
    <location>
        <begin position="272"/>
        <end position="292"/>
    </location>
</feature>
<proteinExistence type="inferred from homology"/>
<gene>
    <name evidence="1" type="primary">secF</name>
    <name type="ordered locus">THEYE_A0279</name>
</gene>
<dbReference type="EMBL" id="CP001147">
    <property type="protein sequence ID" value="ACI20263.1"/>
    <property type="molecule type" value="Genomic_DNA"/>
</dbReference>
<dbReference type="RefSeq" id="WP_012545001.1">
    <property type="nucleotide sequence ID" value="NC_011296.1"/>
</dbReference>
<dbReference type="RefSeq" id="YP_002248127.1">
    <property type="nucleotide sequence ID" value="NC_011296.1"/>
</dbReference>
<dbReference type="SMR" id="B5YIG8"/>
<dbReference type="FunCoup" id="B5YIG8">
    <property type="interactions" value="224"/>
</dbReference>
<dbReference type="STRING" id="289376.THEYE_A0279"/>
<dbReference type="EnsemblBacteria" id="ACI20263">
    <property type="protein sequence ID" value="ACI20263"/>
    <property type="gene ID" value="THEYE_A0279"/>
</dbReference>
<dbReference type="KEGG" id="tye:THEYE_A0279"/>
<dbReference type="PATRIC" id="fig|289376.4.peg.275"/>
<dbReference type="eggNOG" id="COG0341">
    <property type="taxonomic scope" value="Bacteria"/>
</dbReference>
<dbReference type="HOGENOM" id="CLU_050012_0_1_0"/>
<dbReference type="InParanoid" id="B5YIG8"/>
<dbReference type="OrthoDB" id="9774769at2"/>
<dbReference type="Proteomes" id="UP000000718">
    <property type="component" value="Chromosome"/>
</dbReference>
<dbReference type="GO" id="GO:0005886">
    <property type="term" value="C:plasma membrane"/>
    <property type="evidence" value="ECO:0000318"/>
    <property type="project" value="GO_Central"/>
</dbReference>
<dbReference type="GO" id="GO:0015450">
    <property type="term" value="F:protein-transporting ATPase activity"/>
    <property type="evidence" value="ECO:0007669"/>
    <property type="project" value="InterPro"/>
</dbReference>
<dbReference type="GO" id="GO:0065002">
    <property type="term" value="P:intracellular protein transmembrane transport"/>
    <property type="evidence" value="ECO:0007669"/>
    <property type="project" value="UniProtKB-UniRule"/>
</dbReference>
<dbReference type="GO" id="GO:0006605">
    <property type="term" value="P:protein targeting"/>
    <property type="evidence" value="ECO:0007669"/>
    <property type="project" value="UniProtKB-UniRule"/>
</dbReference>
<dbReference type="GO" id="GO:0015031">
    <property type="term" value="P:protein transport"/>
    <property type="evidence" value="ECO:0000318"/>
    <property type="project" value="GO_Central"/>
</dbReference>
<dbReference type="GO" id="GO:0043952">
    <property type="term" value="P:protein transport by the Sec complex"/>
    <property type="evidence" value="ECO:0007669"/>
    <property type="project" value="UniProtKB-UniRule"/>
</dbReference>
<dbReference type="FunFam" id="1.20.1640.10:FF:000024">
    <property type="entry name" value="Multifunctional fusion protein"/>
    <property type="match status" value="1"/>
</dbReference>
<dbReference type="Gene3D" id="1.20.1640.10">
    <property type="entry name" value="Multidrug efflux transporter AcrB transmembrane domain"/>
    <property type="match status" value="1"/>
</dbReference>
<dbReference type="HAMAP" id="MF_01464_B">
    <property type="entry name" value="SecF_B"/>
    <property type="match status" value="1"/>
</dbReference>
<dbReference type="InterPro" id="IPR022813">
    <property type="entry name" value="SecD/SecF_arch_bac"/>
</dbReference>
<dbReference type="InterPro" id="IPR022645">
    <property type="entry name" value="SecD/SecF_bac"/>
</dbReference>
<dbReference type="InterPro" id="IPR022646">
    <property type="entry name" value="SecD/SecF_CS"/>
</dbReference>
<dbReference type="InterPro" id="IPR048634">
    <property type="entry name" value="SecD_SecF_C"/>
</dbReference>
<dbReference type="InterPro" id="IPR055344">
    <property type="entry name" value="SecD_SecF_C_bact"/>
</dbReference>
<dbReference type="InterPro" id="IPR005665">
    <property type="entry name" value="SecF_bac"/>
</dbReference>
<dbReference type="NCBIfam" id="TIGR00916">
    <property type="entry name" value="2A0604s01"/>
    <property type="match status" value="1"/>
</dbReference>
<dbReference type="NCBIfam" id="TIGR00966">
    <property type="entry name" value="transloc_SecF"/>
    <property type="match status" value="1"/>
</dbReference>
<dbReference type="PANTHER" id="PTHR30081:SF8">
    <property type="entry name" value="PROTEIN TRANSLOCASE SUBUNIT SECF"/>
    <property type="match status" value="1"/>
</dbReference>
<dbReference type="PANTHER" id="PTHR30081">
    <property type="entry name" value="PROTEIN-EXPORT MEMBRANE PROTEIN SEC"/>
    <property type="match status" value="1"/>
</dbReference>
<dbReference type="Pfam" id="PF07549">
    <property type="entry name" value="Sec_GG"/>
    <property type="match status" value="1"/>
</dbReference>
<dbReference type="Pfam" id="PF02355">
    <property type="entry name" value="SecD_SecF_C"/>
    <property type="match status" value="1"/>
</dbReference>
<dbReference type="PRINTS" id="PR01755">
    <property type="entry name" value="SECFTRNLCASE"/>
</dbReference>
<dbReference type="SUPFAM" id="SSF82866">
    <property type="entry name" value="Multidrug efflux transporter AcrB transmembrane domain"/>
    <property type="match status" value="1"/>
</dbReference>